<comment type="function">
    <text evidence="1">Catalyzes the specific phosphorylation of 1,6-anhydro-N-acetylmuramic acid (anhMurNAc) with the simultaneous cleavage of the 1,6-anhydro ring, generating MurNAc-6-P. Is required for the utilization of anhMurNAc either imported from the medium or derived from its own cell wall murein, and thus plays a role in cell wall recycling.</text>
</comment>
<comment type="catalytic activity">
    <reaction evidence="1">
        <text>1,6-anhydro-N-acetyl-beta-muramate + ATP + H2O = N-acetyl-D-muramate 6-phosphate + ADP + H(+)</text>
        <dbReference type="Rhea" id="RHEA:24952"/>
        <dbReference type="ChEBI" id="CHEBI:15377"/>
        <dbReference type="ChEBI" id="CHEBI:15378"/>
        <dbReference type="ChEBI" id="CHEBI:30616"/>
        <dbReference type="ChEBI" id="CHEBI:58690"/>
        <dbReference type="ChEBI" id="CHEBI:58722"/>
        <dbReference type="ChEBI" id="CHEBI:456216"/>
        <dbReference type="EC" id="2.7.1.170"/>
    </reaction>
</comment>
<comment type="pathway">
    <text evidence="1">Amino-sugar metabolism; 1,6-anhydro-N-acetylmuramate degradation.</text>
</comment>
<comment type="pathway">
    <text evidence="1">Cell wall biogenesis; peptidoglycan recycling.</text>
</comment>
<comment type="similarity">
    <text evidence="1">Belongs to the anhydro-N-acetylmuramic acid kinase family.</text>
</comment>
<evidence type="ECO:0000255" key="1">
    <source>
        <dbReference type="HAMAP-Rule" id="MF_01270"/>
    </source>
</evidence>
<keyword id="KW-0067">ATP-binding</keyword>
<keyword id="KW-0119">Carbohydrate metabolism</keyword>
<keyword id="KW-0418">Kinase</keyword>
<keyword id="KW-0547">Nucleotide-binding</keyword>
<keyword id="KW-1185">Reference proteome</keyword>
<keyword id="KW-0808">Transferase</keyword>
<protein>
    <recommendedName>
        <fullName evidence="1">Anhydro-N-acetylmuramic acid kinase</fullName>
        <ecNumber evidence="1">2.7.1.170</ecNumber>
    </recommendedName>
    <alternativeName>
        <fullName evidence="1">AnhMurNAc kinase</fullName>
    </alternativeName>
</protein>
<feature type="chain" id="PRO_0000249990" description="Anhydro-N-acetylmuramic acid kinase">
    <location>
        <begin position="1"/>
        <end position="376"/>
    </location>
</feature>
<feature type="binding site" evidence="1">
    <location>
        <begin position="16"/>
        <end position="23"/>
    </location>
    <ligand>
        <name>ATP</name>
        <dbReference type="ChEBI" id="CHEBI:30616"/>
    </ligand>
</feature>
<reference key="1">
    <citation type="journal article" date="2006" name="Proc. Natl. Acad. Sci. U.S.A.">
        <title>Burkholderia xenovorans LB400 harbors a multi-replicon, 9.73-Mbp genome shaped for versatility.</title>
        <authorList>
            <person name="Chain P.S.G."/>
            <person name="Denef V.J."/>
            <person name="Konstantinidis K.T."/>
            <person name="Vergez L.M."/>
            <person name="Agullo L."/>
            <person name="Reyes V.L."/>
            <person name="Hauser L."/>
            <person name="Cordova M."/>
            <person name="Gomez L."/>
            <person name="Gonzalez M."/>
            <person name="Land M."/>
            <person name="Lao V."/>
            <person name="Larimer F."/>
            <person name="LiPuma J.J."/>
            <person name="Mahenthiralingam E."/>
            <person name="Malfatti S.A."/>
            <person name="Marx C.J."/>
            <person name="Parnell J.J."/>
            <person name="Ramette A."/>
            <person name="Richardson P."/>
            <person name="Seeger M."/>
            <person name="Smith D."/>
            <person name="Spilker T."/>
            <person name="Sul W.J."/>
            <person name="Tsoi T.V."/>
            <person name="Ulrich L.E."/>
            <person name="Zhulin I.B."/>
            <person name="Tiedje J.M."/>
        </authorList>
    </citation>
    <scope>NUCLEOTIDE SEQUENCE [LARGE SCALE GENOMIC DNA]</scope>
    <source>
        <strain>LB400</strain>
    </source>
</reference>
<gene>
    <name evidence="1" type="primary">anmK</name>
    <name type="ordered locus">Bxeno_A3786</name>
    <name type="ORF">Bxe_A0610</name>
</gene>
<accession>Q13UB5</accession>
<sequence>MAQDPADGVYFGLMSGTSMDGVDGVAVRFAQGKPSVVLAEAFVGFAAGLRDALFALQQPGDNEIEREALAANALATRYAVCCHDLLHNSRVPAAEVRAIGVHGQTVRHRPEKGYTRQINNPALLAEMMHIDVIADFRSRDVAAGGQGAPLVPAFHATVFGAKNETRVVCNLGGISNITILNATGSVRGFDCGPANALLDEWAQRHLGKPFDENGHFAAGGQVDRTLLNALLDEPFFGQQPPKSTGRDLFNADWLDAKLPPFAALDHADVQATLVALTAVTVAREIERHASDAKAVYVCGGGARNPEILKALQQALEDSGVSGVPVMTTDALGVPPSQVEPLAFAWLAMRCVARLPGNLPAVTGASAERVLGAIYPR</sequence>
<dbReference type="EC" id="2.7.1.170" evidence="1"/>
<dbReference type="EMBL" id="CP000270">
    <property type="protein sequence ID" value="ABE32324.1"/>
    <property type="molecule type" value="Genomic_DNA"/>
</dbReference>
<dbReference type="RefSeq" id="WP_011489809.1">
    <property type="nucleotide sequence ID" value="NC_007951.1"/>
</dbReference>
<dbReference type="SMR" id="Q13UB5"/>
<dbReference type="STRING" id="266265.Bxe_A0610"/>
<dbReference type="KEGG" id="bxb:DR64_2778"/>
<dbReference type="KEGG" id="bxe:Bxe_A0610"/>
<dbReference type="PATRIC" id="fig|266265.5.peg.4005"/>
<dbReference type="eggNOG" id="COG2377">
    <property type="taxonomic scope" value="Bacteria"/>
</dbReference>
<dbReference type="OrthoDB" id="9763949at2"/>
<dbReference type="UniPathway" id="UPA00343"/>
<dbReference type="UniPathway" id="UPA00544"/>
<dbReference type="Proteomes" id="UP000001817">
    <property type="component" value="Chromosome 1"/>
</dbReference>
<dbReference type="GO" id="GO:0005524">
    <property type="term" value="F:ATP binding"/>
    <property type="evidence" value="ECO:0007669"/>
    <property type="project" value="UniProtKB-UniRule"/>
</dbReference>
<dbReference type="GO" id="GO:0016301">
    <property type="term" value="F:kinase activity"/>
    <property type="evidence" value="ECO:0007669"/>
    <property type="project" value="UniProtKB-KW"/>
</dbReference>
<dbReference type="GO" id="GO:0016773">
    <property type="term" value="F:phosphotransferase activity, alcohol group as acceptor"/>
    <property type="evidence" value="ECO:0007669"/>
    <property type="project" value="UniProtKB-UniRule"/>
</dbReference>
<dbReference type="GO" id="GO:0097175">
    <property type="term" value="P:1,6-anhydro-N-acetyl-beta-muramic acid catabolic process"/>
    <property type="evidence" value="ECO:0007669"/>
    <property type="project" value="UniProtKB-UniRule"/>
</dbReference>
<dbReference type="GO" id="GO:0006040">
    <property type="term" value="P:amino sugar metabolic process"/>
    <property type="evidence" value="ECO:0007669"/>
    <property type="project" value="InterPro"/>
</dbReference>
<dbReference type="GO" id="GO:0009254">
    <property type="term" value="P:peptidoglycan turnover"/>
    <property type="evidence" value="ECO:0007669"/>
    <property type="project" value="UniProtKB-UniRule"/>
</dbReference>
<dbReference type="CDD" id="cd24050">
    <property type="entry name" value="ASKHA_NBD_ANMK"/>
    <property type="match status" value="1"/>
</dbReference>
<dbReference type="Gene3D" id="3.30.420.40">
    <property type="match status" value="2"/>
</dbReference>
<dbReference type="HAMAP" id="MF_01270">
    <property type="entry name" value="AnhMurNAc_kinase"/>
    <property type="match status" value="1"/>
</dbReference>
<dbReference type="InterPro" id="IPR005338">
    <property type="entry name" value="Anhydro_N_Ac-Mur_kinase"/>
</dbReference>
<dbReference type="InterPro" id="IPR043129">
    <property type="entry name" value="ATPase_NBD"/>
</dbReference>
<dbReference type="NCBIfam" id="NF007139">
    <property type="entry name" value="PRK09585.1-3"/>
    <property type="match status" value="1"/>
</dbReference>
<dbReference type="NCBIfam" id="NF007140">
    <property type="entry name" value="PRK09585.1-4"/>
    <property type="match status" value="1"/>
</dbReference>
<dbReference type="PANTHER" id="PTHR30605">
    <property type="entry name" value="ANHYDRO-N-ACETYLMURAMIC ACID KINASE"/>
    <property type="match status" value="1"/>
</dbReference>
<dbReference type="PANTHER" id="PTHR30605:SF0">
    <property type="entry name" value="ANHYDRO-N-ACETYLMURAMIC ACID KINASE"/>
    <property type="match status" value="1"/>
</dbReference>
<dbReference type="Pfam" id="PF03702">
    <property type="entry name" value="AnmK"/>
    <property type="match status" value="1"/>
</dbReference>
<dbReference type="SUPFAM" id="SSF53067">
    <property type="entry name" value="Actin-like ATPase domain"/>
    <property type="match status" value="1"/>
</dbReference>
<organism>
    <name type="scientific">Paraburkholderia xenovorans (strain LB400)</name>
    <dbReference type="NCBI Taxonomy" id="266265"/>
    <lineage>
        <taxon>Bacteria</taxon>
        <taxon>Pseudomonadati</taxon>
        <taxon>Pseudomonadota</taxon>
        <taxon>Betaproteobacteria</taxon>
        <taxon>Burkholderiales</taxon>
        <taxon>Burkholderiaceae</taxon>
        <taxon>Paraburkholderia</taxon>
    </lineage>
</organism>
<name>ANMK_PARXL</name>
<proteinExistence type="inferred from homology"/>